<comment type="caution">
    <text evidence="1">Product of a dubious gene prediction.</text>
</comment>
<protein>
    <recommendedName>
        <fullName>Putative uncharacterized protein DDB_G0274163</fullName>
    </recommendedName>
</protein>
<gene>
    <name type="ORF">DDB_G0274163</name>
</gene>
<evidence type="ECO:0000305" key="1"/>
<accession>Q86KD3</accession>
<accession>Q554M3</accession>
<organism>
    <name type="scientific">Dictyostelium discoideum</name>
    <name type="common">Social amoeba</name>
    <dbReference type="NCBI Taxonomy" id="44689"/>
    <lineage>
        <taxon>Eukaryota</taxon>
        <taxon>Amoebozoa</taxon>
        <taxon>Evosea</taxon>
        <taxon>Eumycetozoa</taxon>
        <taxon>Dictyostelia</taxon>
        <taxon>Dictyosteliales</taxon>
        <taxon>Dictyosteliaceae</taxon>
        <taxon>Dictyostelium</taxon>
    </lineage>
</organism>
<keyword id="KW-1185">Reference proteome</keyword>
<proteinExistence type="uncertain"/>
<sequence length="43" mass="5482">MWWRFPNLRNNSKYIKNKEEQLLDNQKDNHEFISQSRKRINFD</sequence>
<feature type="chain" id="PRO_0000348130" description="Putative uncharacterized protein DDB_G0274163">
    <location>
        <begin position="1"/>
        <end position="43"/>
    </location>
</feature>
<name>Y7536_DICDI</name>
<reference key="1">
    <citation type="journal article" date="2002" name="Nature">
        <title>Sequence and analysis of chromosome 2 of Dictyostelium discoideum.</title>
        <authorList>
            <person name="Gloeckner G."/>
            <person name="Eichinger L."/>
            <person name="Szafranski K."/>
            <person name="Pachebat J.A."/>
            <person name="Bankier A.T."/>
            <person name="Dear P.H."/>
            <person name="Lehmann R."/>
            <person name="Baumgart C."/>
            <person name="Parra G."/>
            <person name="Abril J.F."/>
            <person name="Guigo R."/>
            <person name="Kumpf K."/>
            <person name="Tunggal B."/>
            <person name="Cox E.C."/>
            <person name="Quail M.A."/>
            <person name="Platzer M."/>
            <person name="Rosenthal A."/>
            <person name="Noegel A.A."/>
        </authorList>
    </citation>
    <scope>NUCLEOTIDE SEQUENCE [LARGE SCALE GENOMIC DNA]</scope>
    <source>
        <strain>AX4</strain>
    </source>
</reference>
<reference key="2">
    <citation type="journal article" date="2005" name="Nature">
        <title>The genome of the social amoeba Dictyostelium discoideum.</title>
        <authorList>
            <person name="Eichinger L."/>
            <person name="Pachebat J.A."/>
            <person name="Gloeckner G."/>
            <person name="Rajandream M.A."/>
            <person name="Sucgang R."/>
            <person name="Berriman M."/>
            <person name="Song J."/>
            <person name="Olsen R."/>
            <person name="Szafranski K."/>
            <person name="Xu Q."/>
            <person name="Tunggal B."/>
            <person name="Kummerfeld S."/>
            <person name="Madera M."/>
            <person name="Konfortov B.A."/>
            <person name="Rivero F."/>
            <person name="Bankier A.T."/>
            <person name="Lehmann R."/>
            <person name="Hamlin N."/>
            <person name="Davies R."/>
            <person name="Gaudet P."/>
            <person name="Fey P."/>
            <person name="Pilcher K."/>
            <person name="Chen G."/>
            <person name="Saunders D."/>
            <person name="Sodergren E.J."/>
            <person name="Davis P."/>
            <person name="Kerhornou A."/>
            <person name="Nie X."/>
            <person name="Hall N."/>
            <person name="Anjard C."/>
            <person name="Hemphill L."/>
            <person name="Bason N."/>
            <person name="Farbrother P."/>
            <person name="Desany B."/>
            <person name="Just E."/>
            <person name="Morio T."/>
            <person name="Rost R."/>
            <person name="Churcher C.M."/>
            <person name="Cooper J."/>
            <person name="Haydock S."/>
            <person name="van Driessche N."/>
            <person name="Cronin A."/>
            <person name="Goodhead I."/>
            <person name="Muzny D.M."/>
            <person name="Mourier T."/>
            <person name="Pain A."/>
            <person name="Lu M."/>
            <person name="Harper D."/>
            <person name="Lindsay R."/>
            <person name="Hauser H."/>
            <person name="James K.D."/>
            <person name="Quiles M."/>
            <person name="Madan Babu M."/>
            <person name="Saito T."/>
            <person name="Buchrieser C."/>
            <person name="Wardroper A."/>
            <person name="Felder M."/>
            <person name="Thangavelu M."/>
            <person name="Johnson D."/>
            <person name="Knights A."/>
            <person name="Loulseged H."/>
            <person name="Mungall K.L."/>
            <person name="Oliver K."/>
            <person name="Price C."/>
            <person name="Quail M.A."/>
            <person name="Urushihara H."/>
            <person name="Hernandez J."/>
            <person name="Rabbinowitsch E."/>
            <person name="Steffen D."/>
            <person name="Sanders M."/>
            <person name="Ma J."/>
            <person name="Kohara Y."/>
            <person name="Sharp S."/>
            <person name="Simmonds M.N."/>
            <person name="Spiegler S."/>
            <person name="Tivey A."/>
            <person name="Sugano S."/>
            <person name="White B."/>
            <person name="Walker D."/>
            <person name="Woodward J.R."/>
            <person name="Winckler T."/>
            <person name="Tanaka Y."/>
            <person name="Shaulsky G."/>
            <person name="Schleicher M."/>
            <person name="Weinstock G.M."/>
            <person name="Rosenthal A."/>
            <person name="Cox E.C."/>
            <person name="Chisholm R.L."/>
            <person name="Gibbs R.A."/>
            <person name="Loomis W.F."/>
            <person name="Platzer M."/>
            <person name="Kay R.R."/>
            <person name="Williams J.G."/>
            <person name="Dear P.H."/>
            <person name="Noegel A.A."/>
            <person name="Barrell B.G."/>
            <person name="Kuspa A."/>
        </authorList>
    </citation>
    <scope>NUCLEOTIDE SEQUENCE [LARGE SCALE GENOMIC DNA]</scope>
    <source>
        <strain>AX4</strain>
    </source>
</reference>
<dbReference type="EMBL" id="AAFI02000012">
    <property type="protein sequence ID" value="EAL69974.1"/>
    <property type="molecule type" value="Genomic_DNA"/>
</dbReference>
<dbReference type="RefSeq" id="XP_644300.1">
    <property type="nucleotide sequence ID" value="XM_639208.1"/>
</dbReference>
<dbReference type="SMR" id="Q86KD3"/>
<dbReference type="PaxDb" id="44689-DDB0302639"/>
<dbReference type="EnsemblProtists" id="EAL69974">
    <property type="protein sequence ID" value="EAL69974"/>
    <property type="gene ID" value="DDB_G0274163"/>
</dbReference>
<dbReference type="GeneID" id="8619728"/>
<dbReference type="KEGG" id="ddi:DDB_G0274163"/>
<dbReference type="dictyBase" id="DDB_G0274163"/>
<dbReference type="VEuPathDB" id="AmoebaDB:DDB_G0274163"/>
<dbReference type="HOGENOM" id="CLU_3243257_0_0_1"/>
<dbReference type="InParanoid" id="Q86KD3"/>
<dbReference type="Proteomes" id="UP000002195">
    <property type="component" value="Chromosome 2"/>
</dbReference>